<evidence type="ECO:0000250" key="1"/>
<evidence type="ECO:0000255" key="2"/>
<evidence type="ECO:0000256" key="3">
    <source>
        <dbReference type="SAM" id="MobiDB-lite"/>
    </source>
</evidence>
<evidence type="ECO:0000269" key="4">
    <source>
    </source>
</evidence>
<evidence type="ECO:0000303" key="5">
    <source>
    </source>
</evidence>
<evidence type="ECO:0000305" key="6"/>
<gene>
    <name type="primary">SLITRK5</name>
    <name type="synonym">KIAA0918</name>
    <name type="synonym">LRRC11</name>
</gene>
<proteinExistence type="evidence at protein level"/>
<name>SLIK5_HUMAN</name>
<keyword id="KW-0025">Alternative splicing</keyword>
<keyword id="KW-0325">Glycoprotein</keyword>
<keyword id="KW-0433">Leucine-rich repeat</keyword>
<keyword id="KW-0472">Membrane</keyword>
<keyword id="KW-1267">Proteomics identification</keyword>
<keyword id="KW-1185">Reference proteome</keyword>
<keyword id="KW-0677">Repeat</keyword>
<keyword id="KW-0732">Signal</keyword>
<keyword id="KW-0812">Transmembrane</keyword>
<keyword id="KW-1133">Transmembrane helix</keyword>
<reference key="1">
    <citation type="journal article" date="1998" name="DNA Res.">
        <title>Prediction of the coding sequences of unidentified human genes. XII. The complete sequences of 100 new cDNA clones from brain which code for large proteins in vitro.</title>
        <authorList>
            <person name="Nagase T."/>
            <person name="Ishikawa K."/>
            <person name="Suyama M."/>
            <person name="Kikuno R."/>
            <person name="Hirosawa M."/>
            <person name="Miyajima N."/>
            <person name="Tanaka A."/>
            <person name="Kotani H."/>
            <person name="Nomura N."/>
            <person name="Ohara O."/>
        </authorList>
    </citation>
    <scope>NUCLEOTIDE SEQUENCE [LARGE SCALE MRNA] (ISOFORM 1)</scope>
    <source>
        <tissue>Brain</tissue>
    </source>
</reference>
<reference key="2">
    <citation type="journal article" date="2004" name="Nat. Genet.">
        <title>Complete sequencing and characterization of 21,243 full-length human cDNAs.</title>
        <authorList>
            <person name="Ota T."/>
            <person name="Suzuki Y."/>
            <person name="Nishikawa T."/>
            <person name="Otsuki T."/>
            <person name="Sugiyama T."/>
            <person name="Irie R."/>
            <person name="Wakamatsu A."/>
            <person name="Hayashi K."/>
            <person name="Sato H."/>
            <person name="Nagai K."/>
            <person name="Kimura K."/>
            <person name="Makita H."/>
            <person name="Sekine M."/>
            <person name="Obayashi M."/>
            <person name="Nishi T."/>
            <person name="Shibahara T."/>
            <person name="Tanaka T."/>
            <person name="Ishii S."/>
            <person name="Yamamoto J."/>
            <person name="Saito K."/>
            <person name="Kawai Y."/>
            <person name="Isono Y."/>
            <person name="Nakamura Y."/>
            <person name="Nagahari K."/>
            <person name="Murakami K."/>
            <person name="Yasuda T."/>
            <person name="Iwayanagi T."/>
            <person name="Wagatsuma M."/>
            <person name="Shiratori A."/>
            <person name="Sudo H."/>
            <person name="Hosoiri T."/>
            <person name="Kaku Y."/>
            <person name="Kodaira H."/>
            <person name="Kondo H."/>
            <person name="Sugawara M."/>
            <person name="Takahashi M."/>
            <person name="Kanda K."/>
            <person name="Yokoi T."/>
            <person name="Furuya T."/>
            <person name="Kikkawa E."/>
            <person name="Omura Y."/>
            <person name="Abe K."/>
            <person name="Kamihara K."/>
            <person name="Katsuta N."/>
            <person name="Sato K."/>
            <person name="Tanikawa M."/>
            <person name="Yamazaki M."/>
            <person name="Ninomiya K."/>
            <person name="Ishibashi T."/>
            <person name="Yamashita H."/>
            <person name="Murakawa K."/>
            <person name="Fujimori K."/>
            <person name="Tanai H."/>
            <person name="Kimata M."/>
            <person name="Watanabe M."/>
            <person name="Hiraoka S."/>
            <person name="Chiba Y."/>
            <person name="Ishida S."/>
            <person name="Ono Y."/>
            <person name="Takiguchi S."/>
            <person name="Watanabe S."/>
            <person name="Yosida M."/>
            <person name="Hotuta T."/>
            <person name="Kusano J."/>
            <person name="Kanehori K."/>
            <person name="Takahashi-Fujii A."/>
            <person name="Hara H."/>
            <person name="Tanase T.-O."/>
            <person name="Nomura Y."/>
            <person name="Togiya S."/>
            <person name="Komai F."/>
            <person name="Hara R."/>
            <person name="Takeuchi K."/>
            <person name="Arita M."/>
            <person name="Imose N."/>
            <person name="Musashino K."/>
            <person name="Yuuki H."/>
            <person name="Oshima A."/>
            <person name="Sasaki N."/>
            <person name="Aotsuka S."/>
            <person name="Yoshikawa Y."/>
            <person name="Matsunawa H."/>
            <person name="Ichihara T."/>
            <person name="Shiohata N."/>
            <person name="Sano S."/>
            <person name="Moriya S."/>
            <person name="Momiyama H."/>
            <person name="Satoh N."/>
            <person name="Takami S."/>
            <person name="Terashima Y."/>
            <person name="Suzuki O."/>
            <person name="Nakagawa S."/>
            <person name="Senoh A."/>
            <person name="Mizoguchi H."/>
            <person name="Goto Y."/>
            <person name="Shimizu F."/>
            <person name="Wakebe H."/>
            <person name="Hishigaki H."/>
            <person name="Watanabe T."/>
            <person name="Sugiyama A."/>
            <person name="Takemoto M."/>
            <person name="Kawakami B."/>
            <person name="Yamazaki M."/>
            <person name="Watanabe K."/>
            <person name="Kumagai A."/>
            <person name="Itakura S."/>
            <person name="Fukuzumi Y."/>
            <person name="Fujimori Y."/>
            <person name="Komiyama M."/>
            <person name="Tashiro H."/>
            <person name="Tanigami A."/>
            <person name="Fujiwara T."/>
            <person name="Ono T."/>
            <person name="Yamada K."/>
            <person name="Fujii Y."/>
            <person name="Ozaki K."/>
            <person name="Hirao M."/>
            <person name="Ohmori Y."/>
            <person name="Kawabata A."/>
            <person name="Hikiji T."/>
            <person name="Kobatake N."/>
            <person name="Inagaki H."/>
            <person name="Ikema Y."/>
            <person name="Okamoto S."/>
            <person name="Okitani R."/>
            <person name="Kawakami T."/>
            <person name="Noguchi S."/>
            <person name="Itoh T."/>
            <person name="Shigeta K."/>
            <person name="Senba T."/>
            <person name="Matsumura K."/>
            <person name="Nakajima Y."/>
            <person name="Mizuno T."/>
            <person name="Morinaga M."/>
            <person name="Sasaki M."/>
            <person name="Togashi T."/>
            <person name="Oyama M."/>
            <person name="Hata H."/>
            <person name="Watanabe M."/>
            <person name="Komatsu T."/>
            <person name="Mizushima-Sugano J."/>
            <person name="Satoh T."/>
            <person name="Shirai Y."/>
            <person name="Takahashi Y."/>
            <person name="Nakagawa K."/>
            <person name="Okumura K."/>
            <person name="Nagase T."/>
            <person name="Nomura N."/>
            <person name="Kikuchi H."/>
            <person name="Masuho Y."/>
            <person name="Yamashita R."/>
            <person name="Nakai K."/>
            <person name="Yada T."/>
            <person name="Nakamura Y."/>
            <person name="Ohara O."/>
            <person name="Isogai T."/>
            <person name="Sugano S."/>
        </authorList>
    </citation>
    <scope>NUCLEOTIDE SEQUENCE [LARGE SCALE MRNA] (ISOFORMS 1 AND 2)</scope>
    <source>
        <tissue>Brain</tissue>
    </source>
</reference>
<reference key="3">
    <citation type="journal article" date="2004" name="Nature">
        <title>The DNA sequence and analysis of human chromosome 13.</title>
        <authorList>
            <person name="Dunham A."/>
            <person name="Matthews L.H."/>
            <person name="Burton J."/>
            <person name="Ashurst J.L."/>
            <person name="Howe K.L."/>
            <person name="Ashcroft K.J."/>
            <person name="Beare D.M."/>
            <person name="Burford D.C."/>
            <person name="Hunt S.E."/>
            <person name="Griffiths-Jones S."/>
            <person name="Jones M.C."/>
            <person name="Keenan S.J."/>
            <person name="Oliver K."/>
            <person name="Scott C.E."/>
            <person name="Ainscough R."/>
            <person name="Almeida J.P."/>
            <person name="Ambrose K.D."/>
            <person name="Andrews D.T."/>
            <person name="Ashwell R.I.S."/>
            <person name="Babbage A.K."/>
            <person name="Bagguley C.L."/>
            <person name="Bailey J."/>
            <person name="Bannerjee R."/>
            <person name="Barlow K.F."/>
            <person name="Bates K."/>
            <person name="Beasley H."/>
            <person name="Bird C.P."/>
            <person name="Bray-Allen S."/>
            <person name="Brown A.J."/>
            <person name="Brown J.Y."/>
            <person name="Burrill W."/>
            <person name="Carder C."/>
            <person name="Carter N.P."/>
            <person name="Chapman J.C."/>
            <person name="Clamp M.E."/>
            <person name="Clark S.Y."/>
            <person name="Clarke G."/>
            <person name="Clee C.M."/>
            <person name="Clegg S.C."/>
            <person name="Cobley V."/>
            <person name="Collins J.E."/>
            <person name="Corby N."/>
            <person name="Coville G.J."/>
            <person name="Deloukas P."/>
            <person name="Dhami P."/>
            <person name="Dunham I."/>
            <person name="Dunn M."/>
            <person name="Earthrowl M.E."/>
            <person name="Ellington A.G."/>
            <person name="Faulkner L."/>
            <person name="Frankish A.G."/>
            <person name="Frankland J."/>
            <person name="French L."/>
            <person name="Garner P."/>
            <person name="Garnett J."/>
            <person name="Gilbert J.G.R."/>
            <person name="Gilson C.J."/>
            <person name="Ghori J."/>
            <person name="Grafham D.V."/>
            <person name="Gribble S.M."/>
            <person name="Griffiths C."/>
            <person name="Hall R.E."/>
            <person name="Hammond S."/>
            <person name="Harley J.L."/>
            <person name="Hart E.A."/>
            <person name="Heath P.D."/>
            <person name="Howden P.J."/>
            <person name="Huckle E.J."/>
            <person name="Hunt P.J."/>
            <person name="Hunt A.R."/>
            <person name="Johnson C."/>
            <person name="Johnson D."/>
            <person name="Kay M."/>
            <person name="Kimberley A.M."/>
            <person name="King A."/>
            <person name="Laird G.K."/>
            <person name="Langford C.J."/>
            <person name="Lawlor S."/>
            <person name="Leongamornlert D.A."/>
            <person name="Lloyd D.M."/>
            <person name="Lloyd C."/>
            <person name="Loveland J.E."/>
            <person name="Lovell J."/>
            <person name="Martin S."/>
            <person name="Mashreghi-Mohammadi M."/>
            <person name="McLaren S.J."/>
            <person name="McMurray A."/>
            <person name="Milne S."/>
            <person name="Moore M.J.F."/>
            <person name="Nickerson T."/>
            <person name="Palmer S.A."/>
            <person name="Pearce A.V."/>
            <person name="Peck A.I."/>
            <person name="Pelan S."/>
            <person name="Phillimore B."/>
            <person name="Porter K.M."/>
            <person name="Rice C.M."/>
            <person name="Searle S."/>
            <person name="Sehra H.K."/>
            <person name="Shownkeen R."/>
            <person name="Skuce C.D."/>
            <person name="Smith M."/>
            <person name="Steward C.A."/>
            <person name="Sycamore N."/>
            <person name="Tester J."/>
            <person name="Thomas D.W."/>
            <person name="Tracey A."/>
            <person name="Tromans A."/>
            <person name="Tubby B."/>
            <person name="Wall M."/>
            <person name="Wallis J.M."/>
            <person name="West A.P."/>
            <person name="Whitehead S.L."/>
            <person name="Willey D.L."/>
            <person name="Wilming L."/>
            <person name="Wray P.W."/>
            <person name="Wright M.W."/>
            <person name="Young L."/>
            <person name="Coulson A."/>
            <person name="Durbin R.M."/>
            <person name="Hubbard T."/>
            <person name="Sulston J.E."/>
            <person name="Beck S."/>
            <person name="Bentley D.R."/>
            <person name="Rogers J."/>
            <person name="Ross M.T."/>
        </authorList>
    </citation>
    <scope>NUCLEOTIDE SEQUENCE [LARGE SCALE GENOMIC DNA]</scope>
</reference>
<reference key="4">
    <citation type="submission" date="2005-07" db="EMBL/GenBank/DDBJ databases">
        <authorList>
            <person name="Mural R.J."/>
            <person name="Istrail S."/>
            <person name="Sutton G.G."/>
            <person name="Florea L."/>
            <person name="Halpern A.L."/>
            <person name="Mobarry C.M."/>
            <person name="Lippert R."/>
            <person name="Walenz B."/>
            <person name="Shatkay H."/>
            <person name="Dew I."/>
            <person name="Miller J.R."/>
            <person name="Flanigan M.J."/>
            <person name="Edwards N.J."/>
            <person name="Bolanos R."/>
            <person name="Fasulo D."/>
            <person name="Halldorsson B.V."/>
            <person name="Hannenhalli S."/>
            <person name="Turner R."/>
            <person name="Yooseph S."/>
            <person name="Lu F."/>
            <person name="Nusskern D.R."/>
            <person name="Shue B.C."/>
            <person name="Zheng X.H."/>
            <person name="Zhong F."/>
            <person name="Delcher A.L."/>
            <person name="Huson D.H."/>
            <person name="Kravitz S.A."/>
            <person name="Mouchard L."/>
            <person name="Reinert K."/>
            <person name="Remington K.A."/>
            <person name="Clark A.G."/>
            <person name="Waterman M.S."/>
            <person name="Eichler E.E."/>
            <person name="Adams M.D."/>
            <person name="Hunkapiller M.W."/>
            <person name="Myers E.W."/>
            <person name="Venter J.C."/>
        </authorList>
    </citation>
    <scope>NUCLEOTIDE SEQUENCE [LARGE SCALE GENOMIC DNA]</scope>
</reference>
<reference key="5">
    <citation type="journal article" date="2004" name="Genome Res.">
        <title>The status, quality, and expansion of the NIH full-length cDNA project: the Mammalian Gene Collection (MGC).</title>
        <authorList>
            <consortium name="The MGC Project Team"/>
        </authorList>
    </citation>
    <scope>NUCLEOTIDE SEQUENCE [LARGE SCALE MRNA] (ISOFORM 1)</scope>
</reference>
<reference key="6">
    <citation type="journal article" date="2003" name="Gene">
        <title>Human SLITRK family genes: genomic organization and expression profiling in normal brain and brain tumor tissue.</title>
        <authorList>
            <person name="Aruga J."/>
            <person name="Yokota N."/>
            <person name="Mikoshiba K."/>
        </authorList>
    </citation>
    <scope>IDENTIFICATION</scope>
    <scope>TISSUE SPECIFICITY</scope>
    <source>
        <tissue>Brain</tissue>
        <tissue>Brain tumor</tissue>
    </source>
</reference>
<comment type="function">
    <text evidence="1">Suppresses neurite outgrowth.</text>
</comment>
<comment type="interaction">
    <interactant intactId="EBI-17240818">
        <id>O94991</id>
    </interactant>
    <interactant intactId="EBI-12006120">
        <id>A0A087WZT3</id>
        <label>BOLA2-SMG1P6</label>
    </interactant>
    <organismsDiffer>false</organismsDiffer>
    <experiments>3</experiments>
</comment>
<comment type="interaction">
    <interactant intactId="EBI-17240818">
        <id>O94991</id>
    </interactant>
    <interactant intactId="EBI-11980535">
        <id>P51800-3</id>
        <label>CLCNKA</label>
    </interactant>
    <organismsDiffer>false</organismsDiffer>
    <experiments>3</experiments>
</comment>
<comment type="subcellular location">
    <subcellularLocation>
        <location evidence="6">Membrane</location>
        <topology evidence="6">Single-pass type I membrane protein</topology>
    </subcellularLocation>
</comment>
<comment type="alternative products">
    <event type="alternative splicing"/>
    <isoform>
        <id>O94991-1</id>
        <name>1</name>
        <sequence type="displayed"/>
    </isoform>
    <isoform>
        <id>O94991-2</id>
        <name>2</name>
        <sequence type="described" ref="VSP_056676 VSP_056677"/>
    </isoform>
</comment>
<comment type="tissue specificity">
    <text evidence="4">Expressed predominantly in the cerebral cortex of the brain but also at low levels in the spinal cord and medulla.</text>
</comment>
<comment type="similarity">
    <text evidence="6">Belongs to the SLITRK family.</text>
</comment>
<comment type="sequence caution" evidence="6">
    <conflict type="erroneous initiation">
        <sequence resource="EMBL-CDS" id="BAA74941"/>
    </conflict>
</comment>
<sequence length="958" mass="107486">MHTCCPPVTLEQDLHRKMHSWMLQTLAFAVTSLVLSCAETIDYYGEICDNACPCEEKDGILTVSCENRGIISLSEISPPRFPIYHLLLSGNLLNRLYPNEFVNYTGASILHLGSNVIQDIETGAFHGLRGLRRLHLNNNKLELLRDDTFLGLENLEYLQVDYNYISVIEPNAFGKLHLLQVLILNDNLLSSLPNNLFRFVPLTHLDLRGNRLKLLPYVGLLQHMDKVVELQLEENPWNCSCELISLKDWLDSISYSALVGDVVCETPFRLHGRDLDEVSKQELCPRRLISDYEMRPQTPLSTTGYLHTTPASVNSVATSSSAVYKPPLKPPKGTRQPNKPRVRPTSRQPSKDLGYSNYGPSIAYQTKSPVPLECPTACSCNLQISDLGLNVNCQERKIESIAELQPKPYNPKKMYLTENYIAVVRRTDFLEATGLDLLHLGNNRISMIQDRAFGDLTNLRRLYLNGNRIERLSPELFYGLQSLQYLFLQYNLIREIQSGTFDPVPNLQLLFLNNNLLQAMPSGVFSGLTLLRLNLRSNHFTSLPVSGVLDQLKSLIQIDLHDNPWDCTCDIVGMKLWVEQLKVGVLVDEVICKAPKKFAETDMRSIKSELLCPDYSDVVVSTPTPSSIQVPARTSAVTPAVRLNSTGAPASLGAGGGASSVPLSVLILSLLLVFIMSVFVAAGLFVLVMKRRKKNQSDHTSTNNSDVSSFNMQYSVYGGGGGTGGHPHAHVHHRGPALPKVKTPAGHVYEYIPHPLGHMCKNPIYRSREGNSVEDYKDLHELKVTYSSNHHLQQQQQPPPPPQQPQQQPPPQLQLQPGEEERRESHHLRSPAYSVSTIEPREDLLSPVQDADRFYRGILEPDKHCSTTPAGNSLPEYPKFPCSPAAYTFSPNYDLRRPHQYLHPGAGDSRLREPVLYSPPSAVFVEPNRNEYLELKAKLNVEPDYLEVLEKQTTFSQF</sequence>
<feature type="signal peptide" evidence="2">
    <location>
        <begin position="1"/>
        <end position="40"/>
    </location>
</feature>
<feature type="chain" id="PRO_0000032681" description="SLIT and NTRK-like protein 5">
    <location>
        <begin position="41"/>
        <end position="958"/>
    </location>
</feature>
<feature type="topological domain" description="Extracellular" evidence="2">
    <location>
        <begin position="41"/>
        <end position="664"/>
    </location>
</feature>
<feature type="transmembrane region" description="Helical" evidence="2">
    <location>
        <begin position="665"/>
        <end position="685"/>
    </location>
</feature>
<feature type="topological domain" description="Cytoplasmic" evidence="2">
    <location>
        <begin position="686"/>
        <end position="958"/>
    </location>
</feature>
<feature type="repeat" description="LRR 1">
    <location>
        <begin position="82"/>
        <end position="103"/>
    </location>
</feature>
<feature type="repeat" description="LRR 2">
    <location>
        <begin position="106"/>
        <end position="127"/>
    </location>
</feature>
<feature type="repeat" description="LRR 3">
    <location>
        <begin position="130"/>
        <end position="151"/>
    </location>
</feature>
<feature type="repeat" description="LRR 4">
    <location>
        <begin position="154"/>
        <end position="175"/>
    </location>
</feature>
<feature type="repeat" description="LRR 5">
    <location>
        <begin position="178"/>
        <end position="199"/>
    </location>
</feature>
<feature type="repeat" description="LRR 6">
    <location>
        <begin position="201"/>
        <end position="222"/>
    </location>
</feature>
<feature type="domain" description="LRRCT 1">
    <location>
        <begin position="235"/>
        <end position="286"/>
    </location>
</feature>
<feature type="domain" description="LRRNT">
    <location>
        <begin position="365"/>
        <end position="407"/>
    </location>
</feature>
<feature type="repeat" description="LRR 7">
    <location>
        <begin position="410"/>
        <end position="431"/>
    </location>
</feature>
<feature type="repeat" description="LRR 8">
    <location>
        <begin position="434"/>
        <end position="455"/>
    </location>
</feature>
<feature type="repeat" description="LRR 9">
    <location>
        <begin position="458"/>
        <end position="479"/>
    </location>
</feature>
<feature type="repeat" description="LRR 10">
    <location>
        <begin position="482"/>
        <end position="503"/>
    </location>
</feature>
<feature type="repeat" description="LRR 11">
    <location>
        <begin position="506"/>
        <end position="527"/>
    </location>
</feature>
<feature type="repeat" description="LRR 12">
    <location>
        <begin position="529"/>
        <end position="550"/>
    </location>
</feature>
<feature type="domain" description="LRRCT 2">
    <location>
        <begin position="563"/>
        <end position="614"/>
    </location>
</feature>
<feature type="region of interest" description="Disordered" evidence="3">
    <location>
        <begin position="317"/>
        <end position="358"/>
    </location>
</feature>
<feature type="region of interest" description="Disordered" evidence="3">
    <location>
        <begin position="789"/>
        <end position="844"/>
    </location>
</feature>
<feature type="compositionally biased region" description="Pro residues" evidence="3">
    <location>
        <begin position="797"/>
        <end position="812"/>
    </location>
</feature>
<feature type="glycosylation site" description="N-linked (GlcNAc...) asparagine" evidence="2">
    <location>
        <position position="103"/>
    </location>
</feature>
<feature type="glycosylation site" description="N-linked (GlcNAc...) asparagine" evidence="2">
    <location>
        <position position="644"/>
    </location>
</feature>
<feature type="splice variant" id="VSP_056676" description="In isoform 2." evidence="5">
    <original>MHTCCPPVTLEQDLHRKMHSWMLQTLAFAVT</original>
    <variation>MGAGKHREGGGGDPTSLNGCADLIQRRTEIS</variation>
    <location>
        <begin position="1"/>
        <end position="31"/>
    </location>
</feature>
<feature type="splice variant" id="VSP_056677" description="In isoform 2." evidence="5">
    <location>
        <begin position="32"/>
        <end position="272"/>
    </location>
</feature>
<protein>
    <recommendedName>
        <fullName>SLIT and NTRK-like protein 5</fullName>
    </recommendedName>
    <alternativeName>
        <fullName>Leucine-rich repeat-containing protein 11</fullName>
    </alternativeName>
</protein>
<dbReference type="EMBL" id="AB020725">
    <property type="protein sequence ID" value="BAA74941.1"/>
    <property type="status" value="ALT_INIT"/>
    <property type="molecule type" value="mRNA"/>
</dbReference>
<dbReference type="EMBL" id="AK024251">
    <property type="protein sequence ID" value="BAG51280.1"/>
    <property type="molecule type" value="mRNA"/>
</dbReference>
<dbReference type="EMBL" id="AK299744">
    <property type="protein sequence ID" value="BAG61637.1"/>
    <property type="molecule type" value="mRNA"/>
</dbReference>
<dbReference type="EMBL" id="AL603883">
    <property type="status" value="NOT_ANNOTATED_CDS"/>
    <property type="molecule type" value="Genomic_DNA"/>
</dbReference>
<dbReference type="EMBL" id="CH471085">
    <property type="protein sequence ID" value="EAX08917.1"/>
    <property type="molecule type" value="Genomic_DNA"/>
</dbReference>
<dbReference type="EMBL" id="BC098106">
    <property type="protein sequence ID" value="AAH98106.1"/>
    <property type="molecule type" value="mRNA"/>
</dbReference>
<dbReference type="EMBL" id="BC103509">
    <property type="protein sequence ID" value="AAI03510.1"/>
    <property type="molecule type" value="mRNA"/>
</dbReference>
<dbReference type="CCDS" id="CCDS9465.1">
    <molecule id="O94991-1"/>
</dbReference>
<dbReference type="RefSeq" id="NP_001371538.1">
    <molecule id="O94991-1"/>
    <property type="nucleotide sequence ID" value="NM_001384609.1"/>
</dbReference>
<dbReference type="RefSeq" id="NP_001371539.1">
    <molecule id="O94991-1"/>
    <property type="nucleotide sequence ID" value="NM_001384610.1"/>
</dbReference>
<dbReference type="RefSeq" id="NP_056382.1">
    <molecule id="O94991-1"/>
    <property type="nucleotide sequence ID" value="NM_015567.2"/>
</dbReference>
<dbReference type="RefSeq" id="XP_005254095.1">
    <property type="nucleotide sequence ID" value="XM_005254038.4"/>
</dbReference>
<dbReference type="RefSeq" id="XP_005254096.1">
    <property type="nucleotide sequence ID" value="XM_005254039.2"/>
</dbReference>
<dbReference type="RefSeq" id="XP_054230392.1">
    <molecule id="O94991-1"/>
    <property type="nucleotide sequence ID" value="XM_054374417.1"/>
</dbReference>
<dbReference type="RefSeq" id="XP_054230393.1">
    <molecule id="O94991-1"/>
    <property type="nucleotide sequence ID" value="XM_054374418.1"/>
</dbReference>
<dbReference type="RefSeq" id="XP_054230394.1">
    <molecule id="O94991-1"/>
    <property type="nucleotide sequence ID" value="XM_054374419.1"/>
</dbReference>
<dbReference type="RefSeq" id="XP_054230395.1">
    <molecule id="O94991-1"/>
    <property type="nucleotide sequence ID" value="XM_054374420.1"/>
</dbReference>
<dbReference type="RefSeq" id="XP_054230396.1">
    <molecule id="O94991-1"/>
    <property type="nucleotide sequence ID" value="XM_054374421.1"/>
</dbReference>
<dbReference type="SMR" id="O94991"/>
<dbReference type="BioGRID" id="117513">
    <property type="interactions" value="57"/>
</dbReference>
<dbReference type="FunCoup" id="O94991">
    <property type="interactions" value="476"/>
</dbReference>
<dbReference type="IntAct" id="O94991">
    <property type="interactions" value="16"/>
</dbReference>
<dbReference type="MINT" id="O94991"/>
<dbReference type="STRING" id="9606.ENSP00000366283"/>
<dbReference type="GlyCosmos" id="O94991">
    <property type="glycosylation" value="2 sites, No reported glycans"/>
</dbReference>
<dbReference type="GlyGen" id="O94991">
    <property type="glycosylation" value="6 sites, 1 O-linked glycan (2 sites)"/>
</dbReference>
<dbReference type="iPTMnet" id="O94991"/>
<dbReference type="PhosphoSitePlus" id="O94991"/>
<dbReference type="BioMuta" id="SLITRK5"/>
<dbReference type="jPOST" id="O94991"/>
<dbReference type="MassIVE" id="O94991"/>
<dbReference type="PaxDb" id="9606-ENSP00000366283"/>
<dbReference type="PeptideAtlas" id="O94991"/>
<dbReference type="ProteomicsDB" id="5027"/>
<dbReference type="ProteomicsDB" id="50619">
    <molecule id="O94991-1"/>
</dbReference>
<dbReference type="Pumba" id="O94991"/>
<dbReference type="Antibodypedia" id="2571">
    <property type="antibodies" value="133 antibodies from 28 providers"/>
</dbReference>
<dbReference type="DNASU" id="26050"/>
<dbReference type="Ensembl" id="ENST00000325089.7">
    <molecule id="O94991-1"/>
    <property type="protein sequence ID" value="ENSP00000366283.2"/>
    <property type="gene ID" value="ENSG00000165300.8"/>
</dbReference>
<dbReference type="Ensembl" id="ENST00000683689.1">
    <molecule id="O94991-1"/>
    <property type="protein sequence ID" value="ENSP00000508338.1"/>
    <property type="gene ID" value="ENSG00000165300.8"/>
</dbReference>
<dbReference type="GeneID" id="26050"/>
<dbReference type="KEGG" id="hsa:26050"/>
<dbReference type="MANE-Select" id="ENST00000683689.1">
    <property type="protein sequence ID" value="ENSP00000508338.1"/>
    <property type="RefSeq nucleotide sequence ID" value="NM_001384609.1"/>
    <property type="RefSeq protein sequence ID" value="NP_001371538.1"/>
</dbReference>
<dbReference type="UCSC" id="uc001vln.4">
    <molecule id="O94991-1"/>
    <property type="organism name" value="human"/>
</dbReference>
<dbReference type="AGR" id="HGNC:20295"/>
<dbReference type="CTD" id="26050"/>
<dbReference type="DisGeNET" id="26050"/>
<dbReference type="GeneCards" id="SLITRK5"/>
<dbReference type="HGNC" id="HGNC:20295">
    <property type="gene designation" value="SLITRK5"/>
</dbReference>
<dbReference type="HPA" id="ENSG00000165300">
    <property type="expression patterns" value="Tissue enhanced (brain, fallopian tube, salivary gland)"/>
</dbReference>
<dbReference type="MalaCards" id="SLITRK5"/>
<dbReference type="MIM" id="609680">
    <property type="type" value="gene"/>
</dbReference>
<dbReference type="neXtProt" id="NX_O94991"/>
<dbReference type="OpenTargets" id="ENSG00000165300"/>
<dbReference type="PharmGKB" id="PA134885524"/>
<dbReference type="VEuPathDB" id="HostDB:ENSG00000165300"/>
<dbReference type="eggNOG" id="ENOG502QUVV">
    <property type="taxonomic scope" value="Eukaryota"/>
</dbReference>
<dbReference type="GeneTree" id="ENSGT00940000158453"/>
<dbReference type="HOGENOM" id="CLU_012706_1_0_1"/>
<dbReference type="InParanoid" id="O94991"/>
<dbReference type="OMA" id="DIVGMKI"/>
<dbReference type="OrthoDB" id="676979at2759"/>
<dbReference type="PAN-GO" id="O94991">
    <property type="GO annotations" value="2 GO annotations based on evolutionary models"/>
</dbReference>
<dbReference type="PhylomeDB" id="O94991"/>
<dbReference type="TreeFam" id="TF326378"/>
<dbReference type="PathwayCommons" id="O94991"/>
<dbReference type="Reactome" id="R-HSA-388844">
    <property type="pathway name" value="Receptor-type tyrosine-protein phosphatases"/>
</dbReference>
<dbReference type="Reactome" id="R-HSA-9013404">
    <property type="pathway name" value="RAC2 GTPase cycle"/>
</dbReference>
<dbReference type="Reactome" id="R-HSA-9013423">
    <property type="pathway name" value="RAC3 GTPase cycle"/>
</dbReference>
<dbReference type="SignaLink" id="O94991"/>
<dbReference type="SIGNOR" id="O94991"/>
<dbReference type="BioGRID-ORCS" id="26050">
    <property type="hits" value="17 hits in 1143 CRISPR screens"/>
</dbReference>
<dbReference type="ChiTaRS" id="SLITRK5">
    <property type="organism name" value="human"/>
</dbReference>
<dbReference type="GeneWiki" id="SLITRK5"/>
<dbReference type="GenomeRNAi" id="26050"/>
<dbReference type="Pharos" id="O94991">
    <property type="development level" value="Tbio"/>
</dbReference>
<dbReference type="PRO" id="PR:O94991"/>
<dbReference type="Proteomes" id="UP000005640">
    <property type="component" value="Chromosome 13"/>
</dbReference>
<dbReference type="RNAct" id="O94991">
    <property type="molecule type" value="protein"/>
</dbReference>
<dbReference type="Bgee" id="ENSG00000165300">
    <property type="expression patterns" value="Expressed in middle temporal gyrus and 123 other cell types or tissues"/>
</dbReference>
<dbReference type="GO" id="GO:0098978">
    <property type="term" value="C:glutamatergic synapse"/>
    <property type="evidence" value="ECO:0007669"/>
    <property type="project" value="Ensembl"/>
</dbReference>
<dbReference type="GO" id="GO:0005886">
    <property type="term" value="C:plasma membrane"/>
    <property type="evidence" value="ECO:0000304"/>
    <property type="project" value="Reactome"/>
</dbReference>
<dbReference type="GO" id="GO:0098839">
    <property type="term" value="C:postsynaptic density membrane"/>
    <property type="evidence" value="ECO:0007669"/>
    <property type="project" value="Ensembl"/>
</dbReference>
<dbReference type="GO" id="GO:0043235">
    <property type="term" value="C:receptor complex"/>
    <property type="evidence" value="ECO:0000314"/>
    <property type="project" value="MGI"/>
</dbReference>
<dbReference type="GO" id="GO:0030534">
    <property type="term" value="P:adult behavior"/>
    <property type="evidence" value="ECO:0007669"/>
    <property type="project" value="Ensembl"/>
</dbReference>
<dbReference type="GO" id="GO:0007409">
    <property type="term" value="P:axonogenesis"/>
    <property type="evidence" value="ECO:0000318"/>
    <property type="project" value="GO_Central"/>
</dbReference>
<dbReference type="GO" id="GO:0007268">
    <property type="term" value="P:chemical synaptic transmission"/>
    <property type="evidence" value="ECO:0007669"/>
    <property type="project" value="Ensembl"/>
</dbReference>
<dbReference type="GO" id="GO:0072359">
    <property type="term" value="P:circulatory system development"/>
    <property type="evidence" value="ECO:0007669"/>
    <property type="project" value="Ensembl"/>
</dbReference>
<dbReference type="GO" id="GO:0048813">
    <property type="term" value="P:dendrite morphogenesis"/>
    <property type="evidence" value="ECO:0007669"/>
    <property type="project" value="Ensembl"/>
</dbReference>
<dbReference type="GO" id="GO:0007625">
    <property type="term" value="P:grooming behavior"/>
    <property type="evidence" value="ECO:0007669"/>
    <property type="project" value="Ensembl"/>
</dbReference>
<dbReference type="GO" id="GO:0051965">
    <property type="term" value="P:positive regulation of synapse assembly"/>
    <property type="evidence" value="ECO:0000318"/>
    <property type="project" value="GO_Central"/>
</dbReference>
<dbReference type="GO" id="GO:0150035">
    <property type="term" value="P:regulation of trans-synaptic signaling by BDNF, modulating synaptic transmission"/>
    <property type="evidence" value="ECO:0007669"/>
    <property type="project" value="Ensembl"/>
</dbReference>
<dbReference type="GO" id="GO:0009410">
    <property type="term" value="P:response to xenobiotic stimulus"/>
    <property type="evidence" value="ECO:0007669"/>
    <property type="project" value="Ensembl"/>
</dbReference>
<dbReference type="GO" id="GO:0043588">
    <property type="term" value="P:skin development"/>
    <property type="evidence" value="ECO:0007669"/>
    <property type="project" value="Ensembl"/>
</dbReference>
<dbReference type="GO" id="GO:0021756">
    <property type="term" value="P:striatum development"/>
    <property type="evidence" value="ECO:0007669"/>
    <property type="project" value="Ensembl"/>
</dbReference>
<dbReference type="GO" id="GO:0099560">
    <property type="term" value="P:synaptic membrane adhesion"/>
    <property type="evidence" value="ECO:0000314"/>
    <property type="project" value="SynGO"/>
</dbReference>
<dbReference type="FunFam" id="3.80.10.10:FF:000001">
    <property type="entry name" value="SLIT and NTRK-like family, member 1"/>
    <property type="match status" value="2"/>
</dbReference>
<dbReference type="Gene3D" id="3.80.10.10">
    <property type="entry name" value="Ribonuclease Inhibitor"/>
    <property type="match status" value="2"/>
</dbReference>
<dbReference type="InterPro" id="IPR000483">
    <property type="entry name" value="Cys-rich_flank_reg_C"/>
</dbReference>
<dbReference type="InterPro" id="IPR001611">
    <property type="entry name" value="Leu-rich_rpt"/>
</dbReference>
<dbReference type="InterPro" id="IPR003591">
    <property type="entry name" value="Leu-rich_rpt_typical-subtyp"/>
</dbReference>
<dbReference type="InterPro" id="IPR032675">
    <property type="entry name" value="LRR_dom_sf"/>
</dbReference>
<dbReference type="PANTHER" id="PTHR45773">
    <property type="entry name" value="SLIT AND NTRK-LIKE PROTEIN 4-RELATED"/>
    <property type="match status" value="1"/>
</dbReference>
<dbReference type="PANTHER" id="PTHR45773:SF5">
    <property type="entry name" value="SLIT AND NTRK-LIKE PROTEIN 5"/>
    <property type="match status" value="1"/>
</dbReference>
<dbReference type="Pfam" id="PF13855">
    <property type="entry name" value="LRR_8"/>
    <property type="match status" value="2"/>
</dbReference>
<dbReference type="SMART" id="SM00369">
    <property type="entry name" value="LRR_TYP"/>
    <property type="match status" value="10"/>
</dbReference>
<dbReference type="SMART" id="SM00082">
    <property type="entry name" value="LRRCT"/>
    <property type="match status" value="2"/>
</dbReference>
<dbReference type="SUPFAM" id="SSF52058">
    <property type="entry name" value="L domain-like"/>
    <property type="match status" value="2"/>
</dbReference>
<dbReference type="PROSITE" id="PS51450">
    <property type="entry name" value="LRR"/>
    <property type="match status" value="11"/>
</dbReference>
<organism>
    <name type="scientific">Homo sapiens</name>
    <name type="common">Human</name>
    <dbReference type="NCBI Taxonomy" id="9606"/>
    <lineage>
        <taxon>Eukaryota</taxon>
        <taxon>Metazoa</taxon>
        <taxon>Chordata</taxon>
        <taxon>Craniata</taxon>
        <taxon>Vertebrata</taxon>
        <taxon>Euteleostomi</taxon>
        <taxon>Mammalia</taxon>
        <taxon>Eutheria</taxon>
        <taxon>Euarchontoglires</taxon>
        <taxon>Primates</taxon>
        <taxon>Haplorrhini</taxon>
        <taxon>Catarrhini</taxon>
        <taxon>Hominidae</taxon>
        <taxon>Homo</taxon>
    </lineage>
</organism>
<accession>O94991</accession>
<accession>B3KNB8</accession>
<accession>B4DSH5</accession>
<accession>Q5VT81</accession>